<accession>P9WHU9</accession>
<accession>L0TCJ0</accession>
<accession>P71910</accession>
<feature type="chain" id="PRO_0000109696" description="Glutamate 5-kinase">
    <location>
        <begin position="1"/>
        <end position="376"/>
    </location>
</feature>
<feature type="domain" description="PUA" evidence="1">
    <location>
        <begin position="280"/>
        <end position="358"/>
    </location>
</feature>
<feature type="binding site" evidence="1">
    <location>
        <position position="18"/>
    </location>
    <ligand>
        <name>ATP</name>
        <dbReference type="ChEBI" id="CHEBI:30616"/>
    </ligand>
</feature>
<feature type="binding site" evidence="1">
    <location>
        <position position="58"/>
    </location>
    <ligand>
        <name>substrate</name>
    </ligand>
</feature>
<feature type="binding site" evidence="1">
    <location>
        <position position="145"/>
    </location>
    <ligand>
        <name>substrate</name>
    </ligand>
</feature>
<feature type="binding site" evidence="1">
    <location>
        <position position="157"/>
    </location>
    <ligand>
        <name>substrate</name>
    </ligand>
</feature>
<feature type="binding site" evidence="1">
    <location>
        <begin position="177"/>
        <end position="178"/>
    </location>
    <ligand>
        <name>ATP</name>
        <dbReference type="ChEBI" id="CHEBI:30616"/>
    </ligand>
</feature>
<feature type="binding site" evidence="1">
    <location>
        <begin position="218"/>
        <end position="224"/>
    </location>
    <ligand>
        <name>ATP</name>
        <dbReference type="ChEBI" id="CHEBI:30616"/>
    </ligand>
</feature>
<sequence>MRSPHRDAIRTARGLVVKVGTTALTTPSGMFDAGRLAGLAEAVERRMKAGSDVVIVSSGAIAAGIEPLGLSRRPKDLATKQAAASVGQVALVNSWSAAFARYGRTVGQVLLTAHDISMRVQHTNAQRTLDRLRALHAVAIVNENDTVATNEIRFGDNDRLSALVAHLVGADALVLLSDIDGLYDCDPRKTADATFIPEVSGPADLDGVVAGRSSHLGTGGMASKVAAALLAADAGVPVLLAPAADAATALADASVGTVFAARPARLSARRFWVRYAAEATGALTLDAGAVRAVVRQRRSLLAAGITAVSGRFCGGDVVELRAPDAAMVARGVVAYDASELATMVGRSTSELPGELRRPVVHADDLVAVSAKQAKQV</sequence>
<reference key="1">
    <citation type="journal article" date="1998" name="Nature">
        <title>Deciphering the biology of Mycobacterium tuberculosis from the complete genome sequence.</title>
        <authorList>
            <person name="Cole S.T."/>
            <person name="Brosch R."/>
            <person name="Parkhill J."/>
            <person name="Garnier T."/>
            <person name="Churcher C.M."/>
            <person name="Harris D.E."/>
            <person name="Gordon S.V."/>
            <person name="Eiglmeier K."/>
            <person name="Gas S."/>
            <person name="Barry C.E. III"/>
            <person name="Tekaia F."/>
            <person name="Badcock K."/>
            <person name="Basham D."/>
            <person name="Brown D."/>
            <person name="Chillingworth T."/>
            <person name="Connor R."/>
            <person name="Davies R.M."/>
            <person name="Devlin K."/>
            <person name="Feltwell T."/>
            <person name="Gentles S."/>
            <person name="Hamlin N."/>
            <person name="Holroyd S."/>
            <person name="Hornsby T."/>
            <person name="Jagels K."/>
            <person name="Krogh A."/>
            <person name="McLean J."/>
            <person name="Moule S."/>
            <person name="Murphy L.D."/>
            <person name="Oliver S."/>
            <person name="Osborne J."/>
            <person name="Quail M.A."/>
            <person name="Rajandream M.A."/>
            <person name="Rogers J."/>
            <person name="Rutter S."/>
            <person name="Seeger K."/>
            <person name="Skelton S."/>
            <person name="Squares S."/>
            <person name="Squares R."/>
            <person name="Sulston J.E."/>
            <person name="Taylor K."/>
            <person name="Whitehead S."/>
            <person name="Barrell B.G."/>
        </authorList>
    </citation>
    <scope>NUCLEOTIDE SEQUENCE [LARGE SCALE GENOMIC DNA]</scope>
    <source>
        <strain>ATCC 25618 / H37Rv</strain>
    </source>
</reference>
<reference key="2">
    <citation type="journal article" date="2008" name="BMC Syst. Biol.">
        <title>targetTB: a target identification pipeline for Mycobacterium tuberculosis through an interactome, reactome and genome-scale structural analysis.</title>
        <authorList>
            <person name="Raman K."/>
            <person name="Yeturu K."/>
            <person name="Chandra N."/>
        </authorList>
    </citation>
    <scope>IDENTIFICATION AS A DRUG TARGET [LARGE SCALE ANALYSIS]</scope>
</reference>
<reference key="3">
    <citation type="journal article" date="2011" name="Mol. Cell. Proteomics">
        <title>Proteogenomic analysis of Mycobacterium tuberculosis by high resolution mass spectrometry.</title>
        <authorList>
            <person name="Kelkar D.S."/>
            <person name="Kumar D."/>
            <person name="Kumar P."/>
            <person name="Balakrishnan L."/>
            <person name="Muthusamy B."/>
            <person name="Yadav A.K."/>
            <person name="Shrivastava P."/>
            <person name="Marimuthu A."/>
            <person name="Anand S."/>
            <person name="Sundaram H."/>
            <person name="Kingsbury R."/>
            <person name="Harsha H.C."/>
            <person name="Nair B."/>
            <person name="Prasad T.S."/>
            <person name="Chauhan D.S."/>
            <person name="Katoch K."/>
            <person name="Katoch V.M."/>
            <person name="Kumar P."/>
            <person name="Chaerkady R."/>
            <person name="Ramachandran S."/>
            <person name="Dash D."/>
            <person name="Pandey A."/>
        </authorList>
    </citation>
    <scope>IDENTIFICATION BY MASS SPECTROMETRY [LARGE SCALE ANALYSIS]</scope>
    <source>
        <strain>ATCC 25618 / H37Rv</strain>
    </source>
</reference>
<organism>
    <name type="scientific">Mycobacterium tuberculosis (strain ATCC 25618 / H37Rv)</name>
    <dbReference type="NCBI Taxonomy" id="83332"/>
    <lineage>
        <taxon>Bacteria</taxon>
        <taxon>Bacillati</taxon>
        <taxon>Actinomycetota</taxon>
        <taxon>Actinomycetes</taxon>
        <taxon>Mycobacteriales</taxon>
        <taxon>Mycobacteriaceae</taxon>
        <taxon>Mycobacterium</taxon>
        <taxon>Mycobacterium tuberculosis complex</taxon>
    </lineage>
</organism>
<dbReference type="EC" id="2.7.2.11" evidence="1"/>
<dbReference type="EMBL" id="AL123456">
    <property type="protein sequence ID" value="CCP45232.1"/>
    <property type="molecule type" value="Genomic_DNA"/>
</dbReference>
<dbReference type="PIR" id="E70680">
    <property type="entry name" value="E70680"/>
</dbReference>
<dbReference type="RefSeq" id="NP_216955.1">
    <property type="nucleotide sequence ID" value="NC_000962.3"/>
</dbReference>
<dbReference type="RefSeq" id="WP_003906819.1">
    <property type="nucleotide sequence ID" value="NZ_NVQJ01000024.1"/>
</dbReference>
<dbReference type="SMR" id="P9WHU9"/>
<dbReference type="FunCoup" id="P9WHU9">
    <property type="interactions" value="138"/>
</dbReference>
<dbReference type="STRING" id="83332.Rv2439c"/>
<dbReference type="PaxDb" id="83332-Rv2439c"/>
<dbReference type="DNASU" id="885266"/>
<dbReference type="GeneID" id="885266"/>
<dbReference type="KEGG" id="mtu:Rv2439c"/>
<dbReference type="KEGG" id="mtv:RVBD_2439c"/>
<dbReference type="TubercuList" id="Rv2439c"/>
<dbReference type="eggNOG" id="COG0263">
    <property type="taxonomic scope" value="Bacteria"/>
</dbReference>
<dbReference type="InParanoid" id="P9WHU9"/>
<dbReference type="OrthoDB" id="9804434at2"/>
<dbReference type="PhylomeDB" id="P9WHU9"/>
<dbReference type="BRENDA" id="2.7.2.11">
    <property type="organism ID" value="3445"/>
</dbReference>
<dbReference type="UniPathway" id="UPA00098">
    <property type="reaction ID" value="UER00359"/>
</dbReference>
<dbReference type="Proteomes" id="UP000001584">
    <property type="component" value="Chromosome"/>
</dbReference>
<dbReference type="GO" id="GO:0005829">
    <property type="term" value="C:cytosol"/>
    <property type="evidence" value="ECO:0000318"/>
    <property type="project" value="GO_Central"/>
</dbReference>
<dbReference type="GO" id="GO:0005524">
    <property type="term" value="F:ATP binding"/>
    <property type="evidence" value="ECO:0007669"/>
    <property type="project" value="UniProtKB-KW"/>
</dbReference>
<dbReference type="GO" id="GO:0004349">
    <property type="term" value="F:glutamate 5-kinase activity"/>
    <property type="evidence" value="ECO:0000318"/>
    <property type="project" value="GO_Central"/>
</dbReference>
<dbReference type="GO" id="GO:0003723">
    <property type="term" value="F:RNA binding"/>
    <property type="evidence" value="ECO:0007669"/>
    <property type="project" value="InterPro"/>
</dbReference>
<dbReference type="GO" id="GO:0055129">
    <property type="term" value="P:L-proline biosynthetic process"/>
    <property type="evidence" value="ECO:0007669"/>
    <property type="project" value="UniProtKB-UniRule"/>
</dbReference>
<dbReference type="GO" id="GO:0006561">
    <property type="term" value="P:proline biosynthetic process"/>
    <property type="evidence" value="ECO:0000318"/>
    <property type="project" value="GO_Central"/>
</dbReference>
<dbReference type="CDD" id="cd04242">
    <property type="entry name" value="AAK_G5K_ProB"/>
    <property type="match status" value="1"/>
</dbReference>
<dbReference type="CDD" id="cd21157">
    <property type="entry name" value="PUA_G5K"/>
    <property type="match status" value="1"/>
</dbReference>
<dbReference type="FunFam" id="3.40.1160.10:FF:000018">
    <property type="entry name" value="Glutamate 5-kinase"/>
    <property type="match status" value="1"/>
</dbReference>
<dbReference type="Gene3D" id="3.40.1160.10">
    <property type="entry name" value="Acetylglutamate kinase-like"/>
    <property type="match status" value="1"/>
</dbReference>
<dbReference type="Gene3D" id="2.30.130.10">
    <property type="entry name" value="PUA domain"/>
    <property type="match status" value="1"/>
</dbReference>
<dbReference type="HAMAP" id="MF_00456">
    <property type="entry name" value="ProB"/>
    <property type="match status" value="1"/>
</dbReference>
<dbReference type="InterPro" id="IPR036393">
    <property type="entry name" value="AceGlu_kinase-like_sf"/>
</dbReference>
<dbReference type="InterPro" id="IPR001048">
    <property type="entry name" value="Asp/Glu/Uridylate_kinase"/>
</dbReference>
<dbReference type="InterPro" id="IPR041739">
    <property type="entry name" value="G5K_ProB"/>
</dbReference>
<dbReference type="InterPro" id="IPR001057">
    <property type="entry name" value="Glu/AcGlu_kinase"/>
</dbReference>
<dbReference type="InterPro" id="IPR011529">
    <property type="entry name" value="Glu_5kinase"/>
</dbReference>
<dbReference type="InterPro" id="IPR005715">
    <property type="entry name" value="Glu_5kinase/COase_Synthase"/>
</dbReference>
<dbReference type="InterPro" id="IPR019797">
    <property type="entry name" value="Glutamate_5-kinase_CS"/>
</dbReference>
<dbReference type="InterPro" id="IPR002478">
    <property type="entry name" value="PUA"/>
</dbReference>
<dbReference type="InterPro" id="IPR015947">
    <property type="entry name" value="PUA-like_sf"/>
</dbReference>
<dbReference type="InterPro" id="IPR036974">
    <property type="entry name" value="PUA_sf"/>
</dbReference>
<dbReference type="NCBIfam" id="TIGR01027">
    <property type="entry name" value="proB"/>
    <property type="match status" value="1"/>
</dbReference>
<dbReference type="PANTHER" id="PTHR43654">
    <property type="entry name" value="GLUTAMATE 5-KINASE"/>
    <property type="match status" value="1"/>
</dbReference>
<dbReference type="PANTHER" id="PTHR43654:SF1">
    <property type="entry name" value="ISOPENTENYL PHOSPHATE KINASE"/>
    <property type="match status" value="1"/>
</dbReference>
<dbReference type="Pfam" id="PF00696">
    <property type="entry name" value="AA_kinase"/>
    <property type="match status" value="1"/>
</dbReference>
<dbReference type="Pfam" id="PF01472">
    <property type="entry name" value="PUA"/>
    <property type="match status" value="1"/>
</dbReference>
<dbReference type="PIRSF" id="PIRSF000729">
    <property type="entry name" value="GK"/>
    <property type="match status" value="1"/>
</dbReference>
<dbReference type="PRINTS" id="PR00474">
    <property type="entry name" value="GLU5KINASE"/>
</dbReference>
<dbReference type="SMART" id="SM00359">
    <property type="entry name" value="PUA"/>
    <property type="match status" value="1"/>
</dbReference>
<dbReference type="SUPFAM" id="SSF53633">
    <property type="entry name" value="Carbamate kinase-like"/>
    <property type="match status" value="1"/>
</dbReference>
<dbReference type="SUPFAM" id="SSF88697">
    <property type="entry name" value="PUA domain-like"/>
    <property type="match status" value="1"/>
</dbReference>
<dbReference type="PROSITE" id="PS00902">
    <property type="entry name" value="GLUTAMATE_5_KINASE"/>
    <property type="match status" value="1"/>
</dbReference>
<dbReference type="PROSITE" id="PS50890">
    <property type="entry name" value="PUA"/>
    <property type="match status" value="1"/>
</dbReference>
<comment type="function">
    <text evidence="1">Catalyzes the transfer of a phosphate group to glutamate to form L-glutamate 5-phosphate.</text>
</comment>
<comment type="catalytic activity">
    <reaction evidence="1">
        <text>L-glutamate + ATP = L-glutamyl 5-phosphate + ADP</text>
        <dbReference type="Rhea" id="RHEA:14877"/>
        <dbReference type="ChEBI" id="CHEBI:29985"/>
        <dbReference type="ChEBI" id="CHEBI:30616"/>
        <dbReference type="ChEBI" id="CHEBI:58274"/>
        <dbReference type="ChEBI" id="CHEBI:456216"/>
        <dbReference type="EC" id="2.7.2.11"/>
    </reaction>
</comment>
<comment type="pathway">
    <text evidence="1">Amino-acid biosynthesis; L-proline biosynthesis; L-glutamate 5-semialdehyde from L-glutamate: step 1/2.</text>
</comment>
<comment type="subcellular location">
    <subcellularLocation>
        <location evidence="1">Cytoplasm</location>
    </subcellularLocation>
</comment>
<comment type="miscellaneous">
    <text>Was identified as a high-confidence drug target.</text>
</comment>
<comment type="similarity">
    <text evidence="1">Belongs to the glutamate 5-kinase family.</text>
</comment>
<name>PROB_MYCTU</name>
<protein>
    <recommendedName>
        <fullName evidence="1">Glutamate 5-kinase</fullName>
        <ecNumber evidence="1">2.7.2.11</ecNumber>
    </recommendedName>
    <alternativeName>
        <fullName evidence="1">Gamma-glutamyl kinase</fullName>
        <shortName evidence="1">GK</shortName>
    </alternativeName>
</protein>
<gene>
    <name evidence="1" type="primary">proB</name>
    <name type="ordered locus">Rv2439c</name>
    <name type="ORF">MTCY428.07</name>
</gene>
<keyword id="KW-0028">Amino-acid biosynthesis</keyword>
<keyword id="KW-0067">ATP-binding</keyword>
<keyword id="KW-0963">Cytoplasm</keyword>
<keyword id="KW-0418">Kinase</keyword>
<keyword id="KW-0547">Nucleotide-binding</keyword>
<keyword id="KW-0641">Proline biosynthesis</keyword>
<keyword id="KW-1185">Reference proteome</keyword>
<keyword id="KW-0808">Transferase</keyword>
<proteinExistence type="evidence at protein level"/>
<evidence type="ECO:0000255" key="1">
    <source>
        <dbReference type="HAMAP-Rule" id="MF_00456"/>
    </source>
</evidence>